<feature type="chain" id="PRO_0000441033" description="MADS-box protein EJ2">
    <location>
        <begin position="1"/>
        <end position="246"/>
    </location>
</feature>
<feature type="domain" description="MADS-box" evidence="1">
    <location>
        <begin position="1"/>
        <end position="61"/>
    </location>
</feature>
<feature type="domain" description="K-box" evidence="2">
    <location>
        <begin position="87"/>
        <end position="177"/>
    </location>
</feature>
<keyword id="KW-0238">DNA-binding</keyword>
<keyword id="KW-0539">Nucleus</keyword>
<keyword id="KW-1185">Reference proteome</keyword>
<keyword id="KW-0804">Transcription</keyword>
<keyword id="KW-0805">Transcription regulation</keyword>
<reference key="1">
    <citation type="journal article" date="2011" name="Gene">
        <title>Identification of three tomato flower and fruit MADS-box proteins with a putative histone deacetylase binding domain.</title>
        <authorList>
            <person name="Gaffe J."/>
            <person name="Lemercier C."/>
            <person name="Alcaraz J.P."/>
            <person name="Kuntz M."/>
        </authorList>
    </citation>
    <scope>NUCLEOTIDE SEQUENCE [MRNA]</scope>
    <source>
        <strain>cv. MicroTom</strain>
    </source>
</reference>
<reference key="2">
    <citation type="journal article" date="2012" name="Nature">
        <title>The tomato genome sequence provides insights into fleshy fruit evolution.</title>
        <authorList>
            <consortium name="Tomato Genome Consortium"/>
        </authorList>
    </citation>
    <scope>NUCLEOTIDE SEQUENCE [LARGE SCALE GENOMIC DNA]</scope>
    <source>
        <strain>cv. Heinz 1706</strain>
    </source>
</reference>
<reference key="3">
    <citation type="journal article" date="2017" name="Cell">
        <title>Bypassing negative epistasis on yield in tomato imposed by a domestication gene.</title>
        <authorList>
            <person name="Soyk S."/>
            <person name="Lemmon Z.H."/>
            <person name="Oved M."/>
            <person name="Fisher J."/>
            <person name="Liberatore K.L."/>
            <person name="Park S.J."/>
            <person name="Goren A."/>
            <person name="Jiang K."/>
            <person name="Ramos A."/>
            <person name="van der Knaap E."/>
            <person name="Van Eck J."/>
            <person name="Zamir D."/>
            <person name="Eshed Y."/>
            <person name="Lippman Z.B."/>
        </authorList>
    </citation>
    <scope>FUNCTION</scope>
    <scope>BIOTECHNOLOGY</scope>
</reference>
<sequence>MGRGRVELKRIENKINRQVTFAKRRNGLLKKAYELSVLCDAEVALIIFSNRGKLYEFCSTSSMVKTIEKYQRCSYATLEANQSVTDTQNNYHEYLRLKARVELLQRSQRNFLGEDLGTLSSKDLEQLENQLESSLKQIRSRKTQFMLDQLADLQQKEQMLAESNRLLRRKLEESVAGFPLRLCWEDGGDHQLMHQQNRLPNTEGFFQPLGLHSSSPHFGYNPVNTDEVNAAATAHNMNGFIHGWML</sequence>
<evidence type="ECO:0000255" key="1">
    <source>
        <dbReference type="PROSITE-ProRule" id="PRU00251"/>
    </source>
</evidence>
<evidence type="ECO:0000255" key="2">
    <source>
        <dbReference type="PROSITE-ProRule" id="PRU00629"/>
    </source>
</evidence>
<evidence type="ECO:0000269" key="3">
    <source>
    </source>
</evidence>
<evidence type="ECO:0000303" key="4">
    <source>
    </source>
</evidence>
<evidence type="ECO:0000305" key="5"/>
<evidence type="ECO:0000312" key="6">
    <source>
        <dbReference type="EMBL" id="AAP57412.1"/>
    </source>
</evidence>
<organism>
    <name type="scientific">Solanum lycopersicum</name>
    <name type="common">Tomato</name>
    <name type="synonym">Lycopersicon esculentum</name>
    <dbReference type="NCBI Taxonomy" id="4081"/>
    <lineage>
        <taxon>Eukaryota</taxon>
        <taxon>Viridiplantae</taxon>
        <taxon>Streptophyta</taxon>
        <taxon>Embryophyta</taxon>
        <taxon>Tracheophyta</taxon>
        <taxon>Spermatophyta</taxon>
        <taxon>Magnoliopsida</taxon>
        <taxon>eudicotyledons</taxon>
        <taxon>Gunneridae</taxon>
        <taxon>Pentapetalae</taxon>
        <taxon>asterids</taxon>
        <taxon>lamiids</taxon>
        <taxon>Solanales</taxon>
        <taxon>Solanaceae</taxon>
        <taxon>Solanoideae</taxon>
        <taxon>Solaneae</taxon>
        <taxon>Solanum</taxon>
        <taxon>Solanum subgen. Lycopersicon</taxon>
    </lineage>
</organism>
<proteinExistence type="evidence at protein level"/>
<accession>Q7Y040</accession>
<name>EJ2_SOLLC</name>
<gene>
    <name evidence="4" type="primary">EJ2</name>
    <name type="ordered locus">Solyc03g114840</name>
</gene>
<dbReference type="EMBL" id="AY294329">
    <property type="protein sequence ID" value="AAP57412.1"/>
    <property type="molecule type" value="mRNA"/>
</dbReference>
<dbReference type="SMR" id="Q7Y040"/>
<dbReference type="STRING" id="4081.Q7Y040"/>
<dbReference type="PaxDb" id="4081-Solyc03g114840.2.1"/>
<dbReference type="EnsemblPlants" id="Solyc03g114840.3.1">
    <property type="protein sequence ID" value="Solyc03g114840.3.1"/>
    <property type="gene ID" value="Solyc03g114840.3"/>
</dbReference>
<dbReference type="Gramene" id="Solyc03g114840.3.1">
    <property type="protein sequence ID" value="Solyc03g114840.3.1"/>
    <property type="gene ID" value="Solyc03g114840.3"/>
</dbReference>
<dbReference type="KEGG" id="sly:543884"/>
<dbReference type="eggNOG" id="KOG0014">
    <property type="taxonomic scope" value="Eukaryota"/>
</dbReference>
<dbReference type="HOGENOM" id="CLU_053053_0_2_1"/>
<dbReference type="InParanoid" id="Q7Y040"/>
<dbReference type="OMA" id="NETQNSY"/>
<dbReference type="OrthoDB" id="1898716at2759"/>
<dbReference type="PhylomeDB" id="Q7Y040"/>
<dbReference type="Proteomes" id="UP000004994">
    <property type="component" value="Chromosome 3"/>
</dbReference>
<dbReference type="GO" id="GO:0005634">
    <property type="term" value="C:nucleus"/>
    <property type="evidence" value="ECO:0007669"/>
    <property type="project" value="UniProtKB-SubCell"/>
</dbReference>
<dbReference type="GO" id="GO:0000981">
    <property type="term" value="F:DNA-binding transcription factor activity, RNA polymerase II-specific"/>
    <property type="evidence" value="ECO:0000318"/>
    <property type="project" value="GO_Central"/>
</dbReference>
<dbReference type="GO" id="GO:0046983">
    <property type="term" value="F:protein dimerization activity"/>
    <property type="evidence" value="ECO:0007669"/>
    <property type="project" value="InterPro"/>
</dbReference>
<dbReference type="GO" id="GO:0000978">
    <property type="term" value="F:RNA polymerase II cis-regulatory region sequence-specific DNA binding"/>
    <property type="evidence" value="ECO:0000318"/>
    <property type="project" value="GO_Central"/>
</dbReference>
<dbReference type="GO" id="GO:0045944">
    <property type="term" value="P:positive regulation of transcription by RNA polymerase II"/>
    <property type="evidence" value="ECO:0007669"/>
    <property type="project" value="InterPro"/>
</dbReference>
<dbReference type="GO" id="GO:0006357">
    <property type="term" value="P:regulation of transcription by RNA polymerase II"/>
    <property type="evidence" value="ECO:0000318"/>
    <property type="project" value="GO_Central"/>
</dbReference>
<dbReference type="CDD" id="cd00265">
    <property type="entry name" value="MADS_MEF2_like"/>
    <property type="match status" value="1"/>
</dbReference>
<dbReference type="FunFam" id="3.40.1810.10:FF:000004">
    <property type="entry name" value="MADS-box transcription factor 1"/>
    <property type="match status" value="1"/>
</dbReference>
<dbReference type="Gene3D" id="3.40.1810.10">
    <property type="entry name" value="Transcription factor, MADS-box"/>
    <property type="match status" value="1"/>
</dbReference>
<dbReference type="InterPro" id="IPR050142">
    <property type="entry name" value="MADS-box/MEF2_TF"/>
</dbReference>
<dbReference type="InterPro" id="IPR033896">
    <property type="entry name" value="MEF2-like_N"/>
</dbReference>
<dbReference type="InterPro" id="IPR002487">
    <property type="entry name" value="TF_Kbox"/>
</dbReference>
<dbReference type="InterPro" id="IPR002100">
    <property type="entry name" value="TF_MADSbox"/>
</dbReference>
<dbReference type="InterPro" id="IPR036879">
    <property type="entry name" value="TF_MADSbox_sf"/>
</dbReference>
<dbReference type="PANTHER" id="PTHR48019">
    <property type="entry name" value="SERUM RESPONSE FACTOR HOMOLOG"/>
    <property type="match status" value="1"/>
</dbReference>
<dbReference type="Pfam" id="PF01486">
    <property type="entry name" value="K-box"/>
    <property type="match status" value="1"/>
</dbReference>
<dbReference type="Pfam" id="PF00319">
    <property type="entry name" value="SRF-TF"/>
    <property type="match status" value="1"/>
</dbReference>
<dbReference type="PRINTS" id="PR00404">
    <property type="entry name" value="MADSDOMAIN"/>
</dbReference>
<dbReference type="SMART" id="SM00432">
    <property type="entry name" value="MADS"/>
    <property type="match status" value="1"/>
</dbReference>
<dbReference type="SUPFAM" id="SSF55455">
    <property type="entry name" value="SRF-like"/>
    <property type="match status" value="1"/>
</dbReference>
<dbReference type="PROSITE" id="PS51297">
    <property type="entry name" value="K_BOX"/>
    <property type="match status" value="1"/>
</dbReference>
<dbReference type="PROSITE" id="PS00350">
    <property type="entry name" value="MADS_BOX_1"/>
    <property type="match status" value="1"/>
</dbReference>
<dbReference type="PROSITE" id="PS50066">
    <property type="entry name" value="MADS_BOX_2"/>
    <property type="match status" value="1"/>
</dbReference>
<protein>
    <recommendedName>
        <fullName evidence="5">MADS-box protein EJ2</fullName>
    </recommendedName>
    <alternativeName>
        <fullName evidence="6">MADS-box protein 1</fullName>
        <shortName evidence="6">LeMADS1</shortName>
    </alternativeName>
    <alternativeName>
        <fullName evidence="4">Protein ENHANCER-OF-JOINTLESS-2</fullName>
    </alternativeName>
</protein>
<comment type="function">
    <text evidence="3">MADS-box transcription factor that acts redundantly with J2 to control meristem maturation and inflorescence architecture.</text>
</comment>
<comment type="subcellular location">
    <subcellularLocation>
        <location evidence="1">Nucleus</location>
    </subcellularLocation>
</comment>
<comment type="biotechnology">
    <text evidence="3">Combining natural and engineered alleles of J2 and EJ2 provide a wide range of inflorescence complexity that allows breeding of higher yielding hybrids.</text>
</comment>